<gene>
    <name evidence="1" type="primary">folD</name>
    <name type="ordered locus">SUN_0665</name>
</gene>
<name>FOLD_SULNB</name>
<keyword id="KW-0028">Amino-acid biosynthesis</keyword>
<keyword id="KW-0368">Histidine biosynthesis</keyword>
<keyword id="KW-0378">Hydrolase</keyword>
<keyword id="KW-0486">Methionine biosynthesis</keyword>
<keyword id="KW-0511">Multifunctional enzyme</keyword>
<keyword id="KW-0521">NADP</keyword>
<keyword id="KW-0554">One-carbon metabolism</keyword>
<keyword id="KW-0560">Oxidoreductase</keyword>
<keyword id="KW-0658">Purine biosynthesis</keyword>
<comment type="function">
    <text evidence="1">Catalyzes the oxidation of 5,10-methylenetetrahydrofolate to 5,10-methenyltetrahydrofolate and then the hydrolysis of 5,10-methenyltetrahydrofolate to 10-formyltetrahydrofolate.</text>
</comment>
<comment type="catalytic activity">
    <reaction evidence="1">
        <text>(6R)-5,10-methylene-5,6,7,8-tetrahydrofolate + NADP(+) = (6R)-5,10-methenyltetrahydrofolate + NADPH</text>
        <dbReference type="Rhea" id="RHEA:22812"/>
        <dbReference type="ChEBI" id="CHEBI:15636"/>
        <dbReference type="ChEBI" id="CHEBI:57455"/>
        <dbReference type="ChEBI" id="CHEBI:57783"/>
        <dbReference type="ChEBI" id="CHEBI:58349"/>
        <dbReference type="EC" id="1.5.1.5"/>
    </reaction>
</comment>
<comment type="catalytic activity">
    <reaction evidence="1">
        <text>(6R)-5,10-methenyltetrahydrofolate + H2O = (6R)-10-formyltetrahydrofolate + H(+)</text>
        <dbReference type="Rhea" id="RHEA:23700"/>
        <dbReference type="ChEBI" id="CHEBI:15377"/>
        <dbReference type="ChEBI" id="CHEBI:15378"/>
        <dbReference type="ChEBI" id="CHEBI:57455"/>
        <dbReference type="ChEBI" id="CHEBI:195366"/>
        <dbReference type="EC" id="3.5.4.9"/>
    </reaction>
</comment>
<comment type="pathway">
    <text evidence="1">One-carbon metabolism; tetrahydrofolate interconversion.</text>
</comment>
<comment type="subunit">
    <text evidence="1">Homodimer.</text>
</comment>
<comment type="similarity">
    <text evidence="1">Belongs to the tetrahydrofolate dehydrogenase/cyclohydrolase family.</text>
</comment>
<accession>A6Q815</accession>
<reference key="1">
    <citation type="journal article" date="2007" name="Proc. Natl. Acad. Sci. U.S.A.">
        <title>Deep-sea vent epsilon-proteobacterial genomes provide insights into emergence of pathogens.</title>
        <authorList>
            <person name="Nakagawa S."/>
            <person name="Takaki Y."/>
            <person name="Shimamura S."/>
            <person name="Reysenbach A.-L."/>
            <person name="Takai K."/>
            <person name="Horikoshi K."/>
        </authorList>
    </citation>
    <scope>NUCLEOTIDE SEQUENCE [LARGE SCALE GENOMIC DNA]</scope>
    <source>
        <strain>NBC37-1</strain>
    </source>
</reference>
<organism>
    <name type="scientific">Sulfurovum sp. (strain NBC37-1)</name>
    <dbReference type="NCBI Taxonomy" id="387093"/>
    <lineage>
        <taxon>Bacteria</taxon>
        <taxon>Pseudomonadati</taxon>
        <taxon>Campylobacterota</taxon>
        <taxon>Epsilonproteobacteria</taxon>
        <taxon>Campylobacterales</taxon>
        <taxon>Sulfurovaceae</taxon>
        <taxon>Sulfurovum</taxon>
    </lineage>
</organism>
<evidence type="ECO:0000255" key="1">
    <source>
        <dbReference type="HAMAP-Rule" id="MF_01576"/>
    </source>
</evidence>
<proteinExistence type="inferred from homology"/>
<sequence length="281" mass="30222">MQLIDGKSLAHKVQENVAKEVEELKQVKNIVPGLAVLLIGDDPASHAYVNMKAKACERVGFYSITHNMPDTISQDEIIATIEMMNANPRIDGILVQLPLPKHIDTNKILEVIDPKKDVDGFHAYNVGRLVTGLDSFVACTPLGVMKMFEEYEIDLEGKDVCVVGASNIVGKPMASLLLNANATVTITHIFTKDLKAHTSQADIVVVGVGVPGLIKEDMVKEGAIVIDIGINRIEDGSLVGDVDFKNVAPKCSYITPVPGGVGPMTIAMLLSNTLKSAKQRA</sequence>
<protein>
    <recommendedName>
        <fullName evidence="1">Bifunctional protein FolD</fullName>
    </recommendedName>
    <domain>
        <recommendedName>
            <fullName evidence="1">Methylenetetrahydrofolate dehydrogenase</fullName>
            <ecNumber evidence="1">1.5.1.5</ecNumber>
        </recommendedName>
    </domain>
    <domain>
        <recommendedName>
            <fullName evidence="1">Methenyltetrahydrofolate cyclohydrolase</fullName>
            <ecNumber evidence="1">3.5.4.9</ecNumber>
        </recommendedName>
    </domain>
</protein>
<dbReference type="EC" id="1.5.1.5" evidence="1"/>
<dbReference type="EC" id="3.5.4.9" evidence="1"/>
<dbReference type="EMBL" id="AP009179">
    <property type="protein sequence ID" value="BAF71624.1"/>
    <property type="molecule type" value="Genomic_DNA"/>
</dbReference>
<dbReference type="RefSeq" id="WP_011980357.1">
    <property type="nucleotide sequence ID" value="NC_009663.1"/>
</dbReference>
<dbReference type="SMR" id="A6Q815"/>
<dbReference type="STRING" id="387093.SUN_0665"/>
<dbReference type="KEGG" id="sun:SUN_0665"/>
<dbReference type="eggNOG" id="COG0190">
    <property type="taxonomic scope" value="Bacteria"/>
</dbReference>
<dbReference type="HOGENOM" id="CLU_034045_2_1_7"/>
<dbReference type="OrthoDB" id="9803580at2"/>
<dbReference type="UniPathway" id="UPA00193"/>
<dbReference type="Proteomes" id="UP000006378">
    <property type="component" value="Chromosome"/>
</dbReference>
<dbReference type="GO" id="GO:0005829">
    <property type="term" value="C:cytosol"/>
    <property type="evidence" value="ECO:0007669"/>
    <property type="project" value="TreeGrafter"/>
</dbReference>
<dbReference type="GO" id="GO:0004477">
    <property type="term" value="F:methenyltetrahydrofolate cyclohydrolase activity"/>
    <property type="evidence" value="ECO:0007669"/>
    <property type="project" value="UniProtKB-UniRule"/>
</dbReference>
<dbReference type="GO" id="GO:0004488">
    <property type="term" value="F:methylenetetrahydrofolate dehydrogenase (NADP+) activity"/>
    <property type="evidence" value="ECO:0007669"/>
    <property type="project" value="UniProtKB-UniRule"/>
</dbReference>
<dbReference type="GO" id="GO:0000105">
    <property type="term" value="P:L-histidine biosynthetic process"/>
    <property type="evidence" value="ECO:0007669"/>
    <property type="project" value="UniProtKB-KW"/>
</dbReference>
<dbReference type="GO" id="GO:0009086">
    <property type="term" value="P:methionine biosynthetic process"/>
    <property type="evidence" value="ECO:0007669"/>
    <property type="project" value="UniProtKB-KW"/>
</dbReference>
<dbReference type="GO" id="GO:0006164">
    <property type="term" value="P:purine nucleotide biosynthetic process"/>
    <property type="evidence" value="ECO:0007669"/>
    <property type="project" value="UniProtKB-KW"/>
</dbReference>
<dbReference type="GO" id="GO:0035999">
    <property type="term" value="P:tetrahydrofolate interconversion"/>
    <property type="evidence" value="ECO:0007669"/>
    <property type="project" value="UniProtKB-UniRule"/>
</dbReference>
<dbReference type="CDD" id="cd01080">
    <property type="entry name" value="NAD_bind_m-THF_DH_Cyclohyd"/>
    <property type="match status" value="1"/>
</dbReference>
<dbReference type="FunFam" id="3.40.50.10860:FF:000001">
    <property type="entry name" value="Bifunctional protein FolD"/>
    <property type="match status" value="1"/>
</dbReference>
<dbReference type="FunFam" id="3.40.50.720:FF:000094">
    <property type="entry name" value="Bifunctional protein FolD"/>
    <property type="match status" value="1"/>
</dbReference>
<dbReference type="Gene3D" id="3.40.50.10860">
    <property type="entry name" value="Leucine Dehydrogenase, chain A, domain 1"/>
    <property type="match status" value="1"/>
</dbReference>
<dbReference type="Gene3D" id="3.40.50.720">
    <property type="entry name" value="NAD(P)-binding Rossmann-like Domain"/>
    <property type="match status" value="1"/>
</dbReference>
<dbReference type="HAMAP" id="MF_01576">
    <property type="entry name" value="THF_DHG_CYH"/>
    <property type="match status" value="1"/>
</dbReference>
<dbReference type="InterPro" id="IPR046346">
    <property type="entry name" value="Aminoacid_DH-like_N_sf"/>
</dbReference>
<dbReference type="InterPro" id="IPR036291">
    <property type="entry name" value="NAD(P)-bd_dom_sf"/>
</dbReference>
<dbReference type="InterPro" id="IPR000672">
    <property type="entry name" value="THF_DH/CycHdrlase"/>
</dbReference>
<dbReference type="InterPro" id="IPR020630">
    <property type="entry name" value="THF_DH/CycHdrlase_cat_dom"/>
</dbReference>
<dbReference type="InterPro" id="IPR020867">
    <property type="entry name" value="THF_DH/CycHdrlase_CS"/>
</dbReference>
<dbReference type="InterPro" id="IPR020631">
    <property type="entry name" value="THF_DH/CycHdrlase_NAD-bd_dom"/>
</dbReference>
<dbReference type="NCBIfam" id="NF008058">
    <property type="entry name" value="PRK10792.1"/>
    <property type="match status" value="1"/>
</dbReference>
<dbReference type="NCBIfam" id="NF010780">
    <property type="entry name" value="PRK14183.1"/>
    <property type="match status" value="1"/>
</dbReference>
<dbReference type="NCBIfam" id="NF010783">
    <property type="entry name" value="PRK14186.1"/>
    <property type="match status" value="1"/>
</dbReference>
<dbReference type="NCBIfam" id="NF010787">
    <property type="entry name" value="PRK14191.1"/>
    <property type="match status" value="1"/>
</dbReference>
<dbReference type="PANTHER" id="PTHR48099:SF5">
    <property type="entry name" value="C-1-TETRAHYDROFOLATE SYNTHASE, CYTOPLASMIC"/>
    <property type="match status" value="1"/>
</dbReference>
<dbReference type="PANTHER" id="PTHR48099">
    <property type="entry name" value="C-1-TETRAHYDROFOLATE SYNTHASE, CYTOPLASMIC-RELATED"/>
    <property type="match status" value="1"/>
</dbReference>
<dbReference type="Pfam" id="PF00763">
    <property type="entry name" value="THF_DHG_CYH"/>
    <property type="match status" value="1"/>
</dbReference>
<dbReference type="Pfam" id="PF02882">
    <property type="entry name" value="THF_DHG_CYH_C"/>
    <property type="match status" value="1"/>
</dbReference>
<dbReference type="PRINTS" id="PR00085">
    <property type="entry name" value="THFDHDRGNASE"/>
</dbReference>
<dbReference type="SUPFAM" id="SSF53223">
    <property type="entry name" value="Aminoacid dehydrogenase-like, N-terminal domain"/>
    <property type="match status" value="1"/>
</dbReference>
<dbReference type="SUPFAM" id="SSF51735">
    <property type="entry name" value="NAD(P)-binding Rossmann-fold domains"/>
    <property type="match status" value="1"/>
</dbReference>
<dbReference type="PROSITE" id="PS00766">
    <property type="entry name" value="THF_DHG_CYH_1"/>
    <property type="match status" value="1"/>
</dbReference>
<dbReference type="PROSITE" id="PS00767">
    <property type="entry name" value="THF_DHG_CYH_2"/>
    <property type="match status" value="1"/>
</dbReference>
<feature type="chain" id="PRO_0000305888" description="Bifunctional protein FolD">
    <location>
        <begin position="1"/>
        <end position="281"/>
    </location>
</feature>
<feature type="binding site" evidence="1">
    <location>
        <begin position="164"/>
        <end position="166"/>
    </location>
    <ligand>
        <name>NADP(+)</name>
        <dbReference type="ChEBI" id="CHEBI:58349"/>
    </ligand>
</feature>
<feature type="binding site" evidence="1">
    <location>
        <position position="189"/>
    </location>
    <ligand>
        <name>NADP(+)</name>
        <dbReference type="ChEBI" id="CHEBI:58349"/>
    </ligand>
</feature>
<feature type="binding site" evidence="1">
    <location>
        <position position="230"/>
    </location>
    <ligand>
        <name>NADP(+)</name>
        <dbReference type="ChEBI" id="CHEBI:58349"/>
    </ligand>
</feature>